<evidence type="ECO:0000305" key="1"/>
<evidence type="ECO:0007829" key="2">
    <source>
        <dbReference type="PDB" id="1YWW"/>
    </source>
</evidence>
<keyword id="KW-0002">3D-structure</keyword>
<keyword id="KW-1185">Reference proteome</keyword>
<comment type="similarity">
    <text evidence="1">Belongs to the UPF0337 (CsbD) family.</text>
</comment>
<protein>
    <recommendedName>
        <fullName>UPF0337 protein PA4738</fullName>
    </recommendedName>
</protein>
<accession>Q9HV61</accession>
<proteinExistence type="evidence at protein level"/>
<feature type="chain" id="PRO_0000210016" description="UPF0337 protein PA4738">
    <location>
        <begin position="1"/>
        <end position="65"/>
    </location>
</feature>
<feature type="turn" evidence="2">
    <location>
        <begin position="6"/>
        <end position="8"/>
    </location>
</feature>
<feature type="helix" evidence="2">
    <location>
        <begin position="10"/>
        <end position="20"/>
    </location>
</feature>
<feature type="helix" evidence="2">
    <location>
        <begin position="26"/>
        <end position="29"/>
    </location>
</feature>
<feature type="strand" evidence="2">
    <location>
        <begin position="30"/>
        <end position="32"/>
    </location>
</feature>
<feature type="helix" evidence="2">
    <location>
        <begin position="36"/>
        <end position="46"/>
    </location>
</feature>
<feature type="helix" evidence="2">
    <location>
        <begin position="51"/>
        <end position="63"/>
    </location>
</feature>
<organism>
    <name type="scientific">Pseudomonas aeruginosa (strain ATCC 15692 / DSM 22644 / CIP 104116 / JCM 14847 / LMG 12228 / 1C / PRS 101 / PAO1)</name>
    <dbReference type="NCBI Taxonomy" id="208964"/>
    <lineage>
        <taxon>Bacteria</taxon>
        <taxon>Pseudomonadati</taxon>
        <taxon>Pseudomonadota</taxon>
        <taxon>Gammaproteobacteria</taxon>
        <taxon>Pseudomonadales</taxon>
        <taxon>Pseudomonadaceae</taxon>
        <taxon>Pseudomonas</taxon>
    </lineage>
</organism>
<gene>
    <name type="ordered locus">PA4738</name>
</gene>
<dbReference type="EMBL" id="AE004091">
    <property type="protein sequence ID" value="AAG08124.1"/>
    <property type="molecule type" value="Genomic_DNA"/>
</dbReference>
<dbReference type="PIR" id="F83054">
    <property type="entry name" value="F83054"/>
</dbReference>
<dbReference type="RefSeq" id="NP_253426.1">
    <property type="nucleotide sequence ID" value="NC_002516.2"/>
</dbReference>
<dbReference type="RefSeq" id="WP_003095174.1">
    <property type="nucleotide sequence ID" value="NZ_QZGE01000018.1"/>
</dbReference>
<dbReference type="PDB" id="1YWW">
    <property type="method" value="NMR"/>
    <property type="chains" value="A=1-65"/>
</dbReference>
<dbReference type="PDBsum" id="1YWW"/>
<dbReference type="BMRB" id="Q9HV61"/>
<dbReference type="SMR" id="Q9HV61"/>
<dbReference type="FunCoup" id="Q9HV61">
    <property type="interactions" value="86"/>
</dbReference>
<dbReference type="STRING" id="208964.PA4738"/>
<dbReference type="PaxDb" id="208964-PA4738"/>
<dbReference type="DNASU" id="881664"/>
<dbReference type="GeneID" id="881664"/>
<dbReference type="KEGG" id="pae:PA4738"/>
<dbReference type="PATRIC" id="fig|208964.12.peg.4963"/>
<dbReference type="PseudoCAP" id="PA4738"/>
<dbReference type="HOGENOM" id="CLU_135567_4_1_6"/>
<dbReference type="InParanoid" id="Q9HV61"/>
<dbReference type="OrthoDB" id="9796058at2"/>
<dbReference type="PhylomeDB" id="Q9HV61"/>
<dbReference type="BioCyc" id="PAER208964:G1FZ6-4848-MONOMER"/>
<dbReference type="EvolutionaryTrace" id="Q9HV61"/>
<dbReference type="Proteomes" id="UP000002438">
    <property type="component" value="Chromosome"/>
</dbReference>
<dbReference type="Gene3D" id="1.10.1470.10">
    <property type="entry name" value="YjbJ"/>
    <property type="match status" value="1"/>
</dbReference>
<dbReference type="InterPro" id="IPR008462">
    <property type="entry name" value="CsbD"/>
</dbReference>
<dbReference type="InterPro" id="IPR050423">
    <property type="entry name" value="UPF0337_stress_rsp"/>
</dbReference>
<dbReference type="InterPro" id="IPR026042">
    <property type="entry name" value="YjbJ"/>
</dbReference>
<dbReference type="InterPro" id="IPR036629">
    <property type="entry name" value="YjbJ_sf"/>
</dbReference>
<dbReference type="PANTHER" id="PTHR34977">
    <property type="entry name" value="UPF0337 PROTEIN YJBJ"/>
    <property type="match status" value="1"/>
</dbReference>
<dbReference type="PANTHER" id="PTHR34977:SF1">
    <property type="entry name" value="UPF0337 PROTEIN YJBJ"/>
    <property type="match status" value="1"/>
</dbReference>
<dbReference type="Pfam" id="PF05532">
    <property type="entry name" value="CsbD"/>
    <property type="match status" value="1"/>
</dbReference>
<dbReference type="PIRSF" id="PIRSF039008">
    <property type="entry name" value="YjbJ"/>
    <property type="match status" value="1"/>
</dbReference>
<dbReference type="SUPFAM" id="SSF69047">
    <property type="entry name" value="Hypothetical protein YjbJ"/>
    <property type="match status" value="1"/>
</dbReference>
<sequence length="65" mass="7611">MNSDVIKGKWKQLTGKIKERWGDLTDDDLQAADGHAEYLVGKLQERYGWSKERAEQEVRDFSDRL</sequence>
<name>Y4738_PSEAE</name>
<reference key="1">
    <citation type="journal article" date="2000" name="Nature">
        <title>Complete genome sequence of Pseudomonas aeruginosa PAO1, an opportunistic pathogen.</title>
        <authorList>
            <person name="Stover C.K."/>
            <person name="Pham X.-Q.T."/>
            <person name="Erwin A.L."/>
            <person name="Mizoguchi S.D."/>
            <person name="Warrener P."/>
            <person name="Hickey M.J."/>
            <person name="Brinkman F.S.L."/>
            <person name="Hufnagle W.O."/>
            <person name="Kowalik D.J."/>
            <person name="Lagrou M."/>
            <person name="Garber R.L."/>
            <person name="Goltry L."/>
            <person name="Tolentino E."/>
            <person name="Westbrock-Wadman S."/>
            <person name="Yuan Y."/>
            <person name="Brody L.L."/>
            <person name="Coulter S.N."/>
            <person name="Folger K.R."/>
            <person name="Kas A."/>
            <person name="Larbig K."/>
            <person name="Lim R.M."/>
            <person name="Smith K.A."/>
            <person name="Spencer D.H."/>
            <person name="Wong G.K.-S."/>
            <person name="Wu Z."/>
            <person name="Paulsen I.T."/>
            <person name="Reizer J."/>
            <person name="Saier M.H. Jr."/>
            <person name="Hancock R.E.W."/>
            <person name="Lory S."/>
            <person name="Olson M.V."/>
        </authorList>
    </citation>
    <scope>NUCLEOTIDE SEQUENCE [LARGE SCALE GENOMIC DNA]</scope>
    <source>
        <strain>ATCC 15692 / DSM 22644 / CIP 104116 / JCM 14847 / LMG 12228 / 1C / PRS 101 / PAO1</strain>
    </source>
</reference>